<sequence length="664" mass="76330">MSSIVRNSDDDPLVIAIQQPRIAIESVSPVVEEGAYPAKTESDRDLRLAARIFADGHEVLGAEVVWRRVGETAERRLPLLPEGNDFWSAQLRTPPCGRLYFRIEAWIDRFAGYRRELRAKHGARLPLDLELREGDELLQRCAERGGPEIAAACAPLAERLQACQSVEERVALWLAAQTGELLRLVGPREHLVRSREYPVEVERPLARFASWYELFPRSESGDPTRHGTFDDVIRRLPQIAAMGFDVLYFPPIHPIGRTHRKGRNNSLRAEAGDPGSPYAIGSEEGGHEAIHPELGDREDFRRLLVAVREHGMELALDFAIQCSPDHPWLREHPGWFAWRPDGSLRYAENPPKKYEDIVNVDFYAEQALPSLWEALRDVVLGWVEQGVTLFRVDNPHTKPLPFWEWLIAEVRGRHPQVIFLSEAFTRPAMMARLGKVGFSQSYTYFTWRNDKQELAEYFAELNQPPWRDCYRPNFFVNTPDINPWFLQRSGRPGFLIRAALATMGSGLWGMYSGFELCEAAALPGKEEYLDSEKYQLRPRDYQAPGNIVAEIARLNRIRRENPALQTHLGFQAYNAWNDRILYFGKRTADLANFVLVAVCLDPHEAQEAHFELPLWEFGLPDDASLQGEDLMNGHRWVWHGKVQWMRIEPWHLPFGIWRVRRVDA</sequence>
<reference key="1">
    <citation type="journal article" date="2000" name="Nature">
        <title>Complete genome sequence of Pseudomonas aeruginosa PAO1, an opportunistic pathogen.</title>
        <authorList>
            <person name="Stover C.K."/>
            <person name="Pham X.-Q.T."/>
            <person name="Erwin A.L."/>
            <person name="Mizoguchi S.D."/>
            <person name="Warrener P."/>
            <person name="Hickey M.J."/>
            <person name="Brinkman F.S.L."/>
            <person name="Hufnagle W.O."/>
            <person name="Kowalik D.J."/>
            <person name="Lagrou M."/>
            <person name="Garber R.L."/>
            <person name="Goltry L."/>
            <person name="Tolentino E."/>
            <person name="Westbrock-Wadman S."/>
            <person name="Yuan Y."/>
            <person name="Brody L.L."/>
            <person name="Coulter S.N."/>
            <person name="Folger K.R."/>
            <person name="Kas A."/>
            <person name="Larbig K."/>
            <person name="Lim R.M."/>
            <person name="Smith K.A."/>
            <person name="Spencer D.H."/>
            <person name="Wong G.K.-S."/>
            <person name="Wu Z."/>
            <person name="Paulsen I.T."/>
            <person name="Reizer J."/>
            <person name="Saier M.H. Jr."/>
            <person name="Hancock R.E.W."/>
            <person name="Lory S."/>
            <person name="Olson M.V."/>
        </authorList>
    </citation>
    <scope>NUCLEOTIDE SEQUENCE [LARGE SCALE GENOMIC DNA]</scope>
    <source>
        <strain>ATCC 15692 / DSM 22644 / CIP 104116 / JCM 14847 / LMG 12228 / 1C / PRS 101 / PAO1</strain>
    </source>
</reference>
<dbReference type="EC" id="2.4.99.16" evidence="1"/>
<dbReference type="EMBL" id="AE004091">
    <property type="protein sequence ID" value="AAG05539.1"/>
    <property type="molecule type" value="Genomic_DNA"/>
</dbReference>
<dbReference type="PIR" id="F83376">
    <property type="entry name" value="F83376"/>
</dbReference>
<dbReference type="RefSeq" id="NP_250841.1">
    <property type="nucleotide sequence ID" value="NC_002516.2"/>
</dbReference>
<dbReference type="RefSeq" id="WP_003113645.1">
    <property type="nucleotide sequence ID" value="NZ_QZGE01000014.1"/>
</dbReference>
<dbReference type="SMR" id="Q9I1W4"/>
<dbReference type="STRING" id="208964.PA2151"/>
<dbReference type="CAZy" id="GH13">
    <property type="family name" value="Glycoside Hydrolase Family 13"/>
</dbReference>
<dbReference type="PaxDb" id="208964-PA2151"/>
<dbReference type="GeneID" id="881366"/>
<dbReference type="KEGG" id="pae:PA2151"/>
<dbReference type="PATRIC" id="fig|208964.12.peg.2250"/>
<dbReference type="PseudoCAP" id="PA2151"/>
<dbReference type="HOGENOM" id="CLU_015798_0_0_6"/>
<dbReference type="InParanoid" id="Q9I1W4"/>
<dbReference type="OrthoDB" id="9805159at2"/>
<dbReference type="PhylomeDB" id="Q9I1W4"/>
<dbReference type="BioCyc" id="PAER208964:G1FZ6-2191-MONOMER"/>
<dbReference type="Proteomes" id="UP000002438">
    <property type="component" value="Chromosome"/>
</dbReference>
<dbReference type="GO" id="GO:0004556">
    <property type="term" value="F:alpha-amylase activity"/>
    <property type="evidence" value="ECO:0000318"/>
    <property type="project" value="GO_Central"/>
</dbReference>
<dbReference type="GO" id="GO:0016758">
    <property type="term" value="F:hexosyltransferase activity"/>
    <property type="evidence" value="ECO:0007669"/>
    <property type="project" value="UniProtKB-UniRule"/>
</dbReference>
<dbReference type="GO" id="GO:0030979">
    <property type="term" value="P:alpha-glucan biosynthetic process"/>
    <property type="evidence" value="ECO:0007669"/>
    <property type="project" value="UniProtKB-UniRule"/>
</dbReference>
<dbReference type="GO" id="GO:0009313">
    <property type="term" value="P:oligosaccharide catabolic process"/>
    <property type="evidence" value="ECO:0000318"/>
    <property type="project" value="GO_Central"/>
</dbReference>
<dbReference type="CDD" id="cd11344">
    <property type="entry name" value="AmyAc_GlgE_like"/>
    <property type="match status" value="1"/>
</dbReference>
<dbReference type="Gene3D" id="3.20.20.80">
    <property type="entry name" value="Glycosidases"/>
    <property type="match status" value="1"/>
</dbReference>
<dbReference type="Gene3D" id="2.60.40.1180">
    <property type="entry name" value="Golgi alpha-mannosidase II"/>
    <property type="match status" value="1"/>
</dbReference>
<dbReference type="Gene3D" id="2.60.40.10">
    <property type="entry name" value="Immunoglobulins"/>
    <property type="match status" value="1"/>
</dbReference>
<dbReference type="Gene3D" id="1.20.58.80">
    <property type="entry name" value="Phosphotransferase system, lactose/cellobiose-type IIA subunit"/>
    <property type="match status" value="1"/>
</dbReference>
<dbReference type="HAMAP" id="MF_02124">
    <property type="entry name" value="GlgE"/>
    <property type="match status" value="1"/>
</dbReference>
<dbReference type="InterPro" id="IPR026585">
    <property type="entry name" value="GlgE"/>
</dbReference>
<dbReference type="InterPro" id="IPR049171">
    <property type="entry name" value="GLGE_C"/>
</dbReference>
<dbReference type="InterPro" id="IPR021828">
    <property type="entry name" value="GlgE_dom_N/S"/>
</dbReference>
<dbReference type="InterPro" id="IPR006047">
    <property type="entry name" value="Glyco_hydro_13_cat_dom"/>
</dbReference>
<dbReference type="InterPro" id="IPR013780">
    <property type="entry name" value="Glyco_hydro_b"/>
</dbReference>
<dbReference type="InterPro" id="IPR017853">
    <property type="entry name" value="Glycoside_hydrolase_SF"/>
</dbReference>
<dbReference type="InterPro" id="IPR013783">
    <property type="entry name" value="Ig-like_fold"/>
</dbReference>
<dbReference type="PANTHER" id="PTHR47786">
    <property type="entry name" value="ALPHA-1,4-GLUCAN:MALTOSE-1-PHOSPHATE MALTOSYLTRANSFERASE"/>
    <property type="match status" value="1"/>
</dbReference>
<dbReference type="PANTHER" id="PTHR47786:SF2">
    <property type="entry name" value="GLYCOSYL HYDROLASE FAMILY 13 CATALYTIC DOMAIN-CONTAINING PROTEIN"/>
    <property type="match status" value="1"/>
</dbReference>
<dbReference type="Pfam" id="PF00128">
    <property type="entry name" value="Alpha-amylase"/>
    <property type="match status" value="1"/>
</dbReference>
<dbReference type="Pfam" id="PF21702">
    <property type="entry name" value="GLGE_C"/>
    <property type="match status" value="1"/>
</dbReference>
<dbReference type="Pfam" id="PF11896">
    <property type="entry name" value="GlgE_dom_N_S"/>
    <property type="match status" value="1"/>
</dbReference>
<dbReference type="SMART" id="SM00642">
    <property type="entry name" value="Aamy"/>
    <property type="match status" value="1"/>
</dbReference>
<dbReference type="SUPFAM" id="SSF51445">
    <property type="entry name" value="(Trans)glycosidases"/>
    <property type="match status" value="1"/>
</dbReference>
<feature type="chain" id="PRO_0000413900" description="Alpha-1,4-glucan:maltose-1-phosphate maltosyltransferase">
    <location>
        <begin position="1"/>
        <end position="664"/>
    </location>
</feature>
<feature type="active site" description="Nucleophile" evidence="1">
    <location>
        <position position="393"/>
    </location>
</feature>
<feature type="active site" description="Proton donor" evidence="1">
    <location>
        <position position="422"/>
    </location>
</feature>
<feature type="binding site" evidence="1">
    <location>
        <position position="261"/>
    </location>
    <ligand>
        <name>alpha-maltose 1-phosphate</name>
        <dbReference type="ChEBI" id="CHEBI:63576"/>
    </ligand>
</feature>
<feature type="binding site" evidence="1">
    <location>
        <position position="321"/>
    </location>
    <ligand>
        <name>alpha-maltose 1-phosphate</name>
        <dbReference type="ChEBI" id="CHEBI:63576"/>
    </ligand>
</feature>
<feature type="binding site" evidence="1">
    <location>
        <position position="356"/>
    </location>
    <ligand>
        <name>alpha-maltose 1-phosphate</name>
        <dbReference type="ChEBI" id="CHEBI:63576"/>
    </ligand>
</feature>
<feature type="binding site" evidence="1">
    <location>
        <position position="394"/>
    </location>
    <ligand>
        <name>alpha-maltose 1-phosphate</name>
        <dbReference type="ChEBI" id="CHEBI:63576"/>
    </ligand>
</feature>
<feature type="binding site" evidence="1">
    <location>
        <begin position="533"/>
        <end position="534"/>
    </location>
    <ligand>
        <name>alpha-maltose 1-phosphate</name>
        <dbReference type="ChEBI" id="CHEBI:63576"/>
    </ligand>
</feature>
<feature type="site" description="Transition state stabilizer" evidence="1">
    <location>
        <position position="480"/>
    </location>
</feature>
<gene>
    <name evidence="1" type="primary">glgE</name>
    <name type="ordered locus">PA2151</name>
</gene>
<protein>
    <recommendedName>
        <fullName evidence="1">Alpha-1,4-glucan:maltose-1-phosphate maltosyltransferase</fullName>
        <shortName evidence="1">GMPMT</shortName>
        <ecNumber evidence="1">2.4.99.16</ecNumber>
    </recommendedName>
    <alternativeName>
        <fullName evidence="1">(1-&gt;4)-alpha-D-glucan:maltose-1-phosphate alpha-D-maltosyltransferase</fullName>
    </alternativeName>
</protein>
<comment type="function">
    <text evidence="1">Maltosyltransferase that uses maltose 1-phosphate (M1P) as the sugar donor to elongate linear or branched alpha-(1-&gt;4)-glucans. Is involved in a branched alpha-glucan biosynthetic pathway from trehalose, together with TreS, Mak and GlgB.</text>
</comment>
<comment type="catalytic activity">
    <reaction evidence="1">
        <text>alpha-maltose 1-phosphate + [(1-&gt;4)-alpha-D-glucosyl](n) = [(1-&gt;4)-alpha-D-glucosyl](n+2) + phosphate</text>
        <dbReference type="Rhea" id="RHEA:42692"/>
        <dbReference type="Rhea" id="RHEA-COMP:9584"/>
        <dbReference type="Rhea" id="RHEA-COMP:10183"/>
        <dbReference type="ChEBI" id="CHEBI:15444"/>
        <dbReference type="ChEBI" id="CHEBI:43474"/>
        <dbReference type="ChEBI" id="CHEBI:63576"/>
        <dbReference type="EC" id="2.4.99.16"/>
    </reaction>
</comment>
<comment type="subunit">
    <text evidence="1">Homodimer.</text>
</comment>
<comment type="similarity">
    <text evidence="1">Belongs to the glycosyl hydrolase 13 family. GlgE subfamily.</text>
</comment>
<name>GLGE_PSEAE</name>
<organism>
    <name type="scientific">Pseudomonas aeruginosa (strain ATCC 15692 / DSM 22644 / CIP 104116 / JCM 14847 / LMG 12228 / 1C / PRS 101 / PAO1)</name>
    <dbReference type="NCBI Taxonomy" id="208964"/>
    <lineage>
        <taxon>Bacteria</taxon>
        <taxon>Pseudomonadati</taxon>
        <taxon>Pseudomonadota</taxon>
        <taxon>Gammaproteobacteria</taxon>
        <taxon>Pseudomonadales</taxon>
        <taxon>Pseudomonadaceae</taxon>
        <taxon>Pseudomonas</taxon>
    </lineage>
</organism>
<accession>Q9I1W4</accession>
<proteinExistence type="inferred from homology"/>
<keyword id="KW-0119">Carbohydrate metabolism</keyword>
<keyword id="KW-0328">Glycosyltransferase</keyword>
<keyword id="KW-1185">Reference proteome</keyword>
<keyword id="KW-0808">Transferase</keyword>
<evidence type="ECO:0000255" key="1">
    <source>
        <dbReference type="HAMAP-Rule" id="MF_02124"/>
    </source>
</evidence>